<sequence>MNLNYLDFEQPIADLEGKIEELQLVGSGNALNLSDELERLRQKSAKQTESIYSNLTPWQIVQVARHPQRPYSSDYISRMFEDWDELHGDRHFGDDKAIIGGVGRIDGKPVMVIGEEKGRSVKDKVYRNFGMPKPEGYRKALRLMEMAERFKMPVLTLIDTPGAYPGIDSEERGISESIAQNLAVMSRLRTPIICTVIGEGSSGGALAIGVGDQLNMLQYSTYFVISPEGCANIIWKTVEKAPLAAEAMGVTSSVLADLGIVDETIPEPLGGAHRDIDAMALKLKERLVSQLDRLQAVPIEELLDTRYQRLMSYGNSAV</sequence>
<evidence type="ECO:0000255" key="1">
    <source>
        <dbReference type="HAMAP-Rule" id="MF_00823"/>
    </source>
</evidence>
<evidence type="ECO:0000255" key="2">
    <source>
        <dbReference type="PROSITE-ProRule" id="PRU01137"/>
    </source>
</evidence>
<accession>Q21LR0</accession>
<dbReference type="EC" id="2.1.3.15" evidence="1"/>
<dbReference type="EMBL" id="CP000282">
    <property type="protein sequence ID" value="ABD80369.1"/>
    <property type="molecule type" value="Genomic_DNA"/>
</dbReference>
<dbReference type="RefSeq" id="WP_011467589.1">
    <property type="nucleotide sequence ID" value="NC_007912.1"/>
</dbReference>
<dbReference type="SMR" id="Q21LR0"/>
<dbReference type="STRING" id="203122.Sde_1107"/>
<dbReference type="GeneID" id="98612788"/>
<dbReference type="KEGG" id="sde:Sde_1107"/>
<dbReference type="eggNOG" id="COG0825">
    <property type="taxonomic scope" value="Bacteria"/>
</dbReference>
<dbReference type="HOGENOM" id="CLU_015486_0_2_6"/>
<dbReference type="OrthoDB" id="9808023at2"/>
<dbReference type="UniPathway" id="UPA00655">
    <property type="reaction ID" value="UER00711"/>
</dbReference>
<dbReference type="Proteomes" id="UP000001947">
    <property type="component" value="Chromosome"/>
</dbReference>
<dbReference type="GO" id="GO:0009317">
    <property type="term" value="C:acetyl-CoA carboxylase complex"/>
    <property type="evidence" value="ECO:0007669"/>
    <property type="project" value="InterPro"/>
</dbReference>
<dbReference type="GO" id="GO:0003989">
    <property type="term" value="F:acetyl-CoA carboxylase activity"/>
    <property type="evidence" value="ECO:0007669"/>
    <property type="project" value="InterPro"/>
</dbReference>
<dbReference type="GO" id="GO:0005524">
    <property type="term" value="F:ATP binding"/>
    <property type="evidence" value="ECO:0007669"/>
    <property type="project" value="UniProtKB-KW"/>
</dbReference>
<dbReference type="GO" id="GO:0016743">
    <property type="term" value="F:carboxyl- or carbamoyltransferase activity"/>
    <property type="evidence" value="ECO:0007669"/>
    <property type="project" value="UniProtKB-UniRule"/>
</dbReference>
<dbReference type="GO" id="GO:0006633">
    <property type="term" value="P:fatty acid biosynthetic process"/>
    <property type="evidence" value="ECO:0007669"/>
    <property type="project" value="UniProtKB-KW"/>
</dbReference>
<dbReference type="GO" id="GO:2001295">
    <property type="term" value="P:malonyl-CoA biosynthetic process"/>
    <property type="evidence" value="ECO:0007669"/>
    <property type="project" value="UniProtKB-UniRule"/>
</dbReference>
<dbReference type="Gene3D" id="3.90.226.10">
    <property type="entry name" value="2-enoyl-CoA Hydratase, Chain A, domain 1"/>
    <property type="match status" value="1"/>
</dbReference>
<dbReference type="HAMAP" id="MF_00823">
    <property type="entry name" value="AcetylCoA_CT_alpha"/>
    <property type="match status" value="1"/>
</dbReference>
<dbReference type="InterPro" id="IPR001095">
    <property type="entry name" value="Acetyl_CoA_COase_a_su"/>
</dbReference>
<dbReference type="InterPro" id="IPR029045">
    <property type="entry name" value="ClpP/crotonase-like_dom_sf"/>
</dbReference>
<dbReference type="InterPro" id="IPR011763">
    <property type="entry name" value="COA_CT_C"/>
</dbReference>
<dbReference type="NCBIfam" id="TIGR00513">
    <property type="entry name" value="accA"/>
    <property type="match status" value="1"/>
</dbReference>
<dbReference type="NCBIfam" id="NF041504">
    <property type="entry name" value="AccA_sub"/>
    <property type="match status" value="1"/>
</dbReference>
<dbReference type="NCBIfam" id="NF004344">
    <property type="entry name" value="PRK05724.1"/>
    <property type="match status" value="1"/>
</dbReference>
<dbReference type="PANTHER" id="PTHR42853">
    <property type="entry name" value="ACETYL-COENZYME A CARBOXYLASE CARBOXYL TRANSFERASE SUBUNIT ALPHA"/>
    <property type="match status" value="1"/>
</dbReference>
<dbReference type="PANTHER" id="PTHR42853:SF3">
    <property type="entry name" value="ACETYL-COENZYME A CARBOXYLASE CARBOXYL TRANSFERASE SUBUNIT ALPHA, CHLOROPLASTIC"/>
    <property type="match status" value="1"/>
</dbReference>
<dbReference type="Pfam" id="PF03255">
    <property type="entry name" value="ACCA"/>
    <property type="match status" value="1"/>
</dbReference>
<dbReference type="PRINTS" id="PR01069">
    <property type="entry name" value="ACCCTRFRASEA"/>
</dbReference>
<dbReference type="SUPFAM" id="SSF52096">
    <property type="entry name" value="ClpP/crotonase"/>
    <property type="match status" value="1"/>
</dbReference>
<dbReference type="PROSITE" id="PS50989">
    <property type="entry name" value="COA_CT_CTER"/>
    <property type="match status" value="1"/>
</dbReference>
<organism>
    <name type="scientific">Saccharophagus degradans (strain 2-40 / ATCC 43961 / DSM 17024)</name>
    <dbReference type="NCBI Taxonomy" id="203122"/>
    <lineage>
        <taxon>Bacteria</taxon>
        <taxon>Pseudomonadati</taxon>
        <taxon>Pseudomonadota</taxon>
        <taxon>Gammaproteobacteria</taxon>
        <taxon>Cellvibrionales</taxon>
        <taxon>Cellvibrionaceae</taxon>
        <taxon>Saccharophagus</taxon>
    </lineage>
</organism>
<protein>
    <recommendedName>
        <fullName evidence="1">Acetyl-coenzyme A carboxylase carboxyl transferase subunit alpha</fullName>
        <shortName evidence="1">ACCase subunit alpha</shortName>
        <shortName evidence="1">Acetyl-CoA carboxylase carboxyltransferase subunit alpha</shortName>
        <ecNumber evidence="1">2.1.3.15</ecNumber>
    </recommendedName>
</protein>
<keyword id="KW-0067">ATP-binding</keyword>
<keyword id="KW-0963">Cytoplasm</keyword>
<keyword id="KW-0275">Fatty acid biosynthesis</keyword>
<keyword id="KW-0276">Fatty acid metabolism</keyword>
<keyword id="KW-0444">Lipid biosynthesis</keyword>
<keyword id="KW-0443">Lipid metabolism</keyword>
<keyword id="KW-0547">Nucleotide-binding</keyword>
<keyword id="KW-1185">Reference proteome</keyword>
<keyword id="KW-0808">Transferase</keyword>
<comment type="function">
    <text evidence="1">Component of the acetyl coenzyme A carboxylase (ACC) complex. First, biotin carboxylase catalyzes the carboxylation of biotin on its carrier protein (BCCP) and then the CO(2) group is transferred by the carboxyltransferase to acetyl-CoA to form malonyl-CoA.</text>
</comment>
<comment type="catalytic activity">
    <reaction evidence="1">
        <text>N(6)-carboxybiotinyl-L-lysyl-[protein] + acetyl-CoA = N(6)-biotinyl-L-lysyl-[protein] + malonyl-CoA</text>
        <dbReference type="Rhea" id="RHEA:54728"/>
        <dbReference type="Rhea" id="RHEA-COMP:10505"/>
        <dbReference type="Rhea" id="RHEA-COMP:10506"/>
        <dbReference type="ChEBI" id="CHEBI:57288"/>
        <dbReference type="ChEBI" id="CHEBI:57384"/>
        <dbReference type="ChEBI" id="CHEBI:83144"/>
        <dbReference type="ChEBI" id="CHEBI:83145"/>
        <dbReference type="EC" id="2.1.3.15"/>
    </reaction>
</comment>
<comment type="pathway">
    <text evidence="1">Lipid metabolism; malonyl-CoA biosynthesis; malonyl-CoA from acetyl-CoA: step 1/1.</text>
</comment>
<comment type="subunit">
    <text evidence="1">Acetyl-CoA carboxylase is a heterohexamer composed of biotin carboxyl carrier protein (AccB), biotin carboxylase (AccC) and two subunits each of ACCase subunit alpha (AccA) and ACCase subunit beta (AccD).</text>
</comment>
<comment type="subcellular location">
    <subcellularLocation>
        <location evidence="1">Cytoplasm</location>
    </subcellularLocation>
</comment>
<comment type="similarity">
    <text evidence="1">Belongs to the AccA family.</text>
</comment>
<proteinExistence type="inferred from homology"/>
<feature type="chain" id="PRO_1000062670" description="Acetyl-coenzyme A carboxylase carboxyl transferase subunit alpha">
    <location>
        <begin position="1"/>
        <end position="318"/>
    </location>
</feature>
<feature type="domain" description="CoA carboxyltransferase C-terminal" evidence="2">
    <location>
        <begin position="32"/>
        <end position="293"/>
    </location>
</feature>
<name>ACCA_SACD2</name>
<reference key="1">
    <citation type="journal article" date="2008" name="PLoS Genet.">
        <title>Complete genome sequence of the complex carbohydrate-degrading marine bacterium, Saccharophagus degradans strain 2-40 T.</title>
        <authorList>
            <person name="Weiner R.M."/>
            <person name="Taylor L.E. II"/>
            <person name="Henrissat B."/>
            <person name="Hauser L."/>
            <person name="Land M."/>
            <person name="Coutinho P.M."/>
            <person name="Rancurel C."/>
            <person name="Saunders E.H."/>
            <person name="Longmire A.G."/>
            <person name="Zhang H."/>
            <person name="Bayer E.A."/>
            <person name="Gilbert H.J."/>
            <person name="Larimer F."/>
            <person name="Zhulin I.B."/>
            <person name="Ekborg N.A."/>
            <person name="Lamed R."/>
            <person name="Richardson P.M."/>
            <person name="Borovok I."/>
            <person name="Hutcheson S."/>
        </authorList>
    </citation>
    <scope>NUCLEOTIDE SEQUENCE [LARGE SCALE GENOMIC DNA]</scope>
    <source>
        <strain>2-40 / ATCC 43961 / DSM 17024</strain>
    </source>
</reference>
<gene>
    <name evidence="1" type="primary">accA</name>
    <name type="ordered locus">Sde_1107</name>
</gene>